<proteinExistence type="inferred from homology"/>
<organism>
    <name type="scientific">Francisella tularensis subsp. holarctica (strain OSU18)</name>
    <dbReference type="NCBI Taxonomy" id="393011"/>
    <lineage>
        <taxon>Bacteria</taxon>
        <taxon>Pseudomonadati</taxon>
        <taxon>Pseudomonadota</taxon>
        <taxon>Gammaproteobacteria</taxon>
        <taxon>Thiotrichales</taxon>
        <taxon>Francisellaceae</taxon>
        <taxon>Francisella</taxon>
    </lineage>
</organism>
<accession>Q0BKK1</accession>
<sequence>MQSKFIVIEGLDGAGKSTAISFVRKYLEKNNLAAIYTREPGGTKIAEELRNLVLHNKYDEEIHSDSELLMIYAGRVQHYRNLIAPALEKGINVVSDRFYWSSMAYQGGGRGVELSKIRALNNNFLNGCEPDLVIYLDIDPILGLQRAQKVGSPDRIEKAGLEFFNRTRKVFKDLVKDLDNAIEIDAAKSIQEVEKQIYLILDKHFNFQN</sequence>
<name>KTHY_FRATO</name>
<comment type="function">
    <text evidence="1">Phosphorylation of dTMP to form dTDP in both de novo and salvage pathways of dTTP synthesis.</text>
</comment>
<comment type="catalytic activity">
    <reaction evidence="1">
        <text>dTMP + ATP = dTDP + ADP</text>
        <dbReference type="Rhea" id="RHEA:13517"/>
        <dbReference type="ChEBI" id="CHEBI:30616"/>
        <dbReference type="ChEBI" id="CHEBI:58369"/>
        <dbReference type="ChEBI" id="CHEBI:63528"/>
        <dbReference type="ChEBI" id="CHEBI:456216"/>
        <dbReference type="EC" id="2.7.4.9"/>
    </reaction>
</comment>
<comment type="similarity">
    <text evidence="1">Belongs to the thymidylate kinase family.</text>
</comment>
<reference key="1">
    <citation type="journal article" date="2006" name="J. Bacteriol.">
        <title>Chromosome rearrangement and diversification of Francisella tularensis revealed by the type B (OSU18) genome sequence.</title>
        <authorList>
            <person name="Petrosino J.F."/>
            <person name="Xiang Q."/>
            <person name="Karpathy S.E."/>
            <person name="Jiang H."/>
            <person name="Yerrapragada S."/>
            <person name="Liu Y."/>
            <person name="Gioia J."/>
            <person name="Hemphill L."/>
            <person name="Gonzalez A."/>
            <person name="Raghavan T.M."/>
            <person name="Uzman A."/>
            <person name="Fox G.E."/>
            <person name="Highlander S."/>
            <person name="Reichard M."/>
            <person name="Morton R.J."/>
            <person name="Clinkenbeard K.D."/>
            <person name="Weinstock G.M."/>
        </authorList>
    </citation>
    <scope>NUCLEOTIDE SEQUENCE [LARGE SCALE GENOMIC DNA]</scope>
    <source>
        <strain>OSU18</strain>
    </source>
</reference>
<keyword id="KW-0067">ATP-binding</keyword>
<keyword id="KW-0418">Kinase</keyword>
<keyword id="KW-0545">Nucleotide biosynthesis</keyword>
<keyword id="KW-0547">Nucleotide-binding</keyword>
<keyword id="KW-0808">Transferase</keyword>
<dbReference type="EC" id="2.7.4.9" evidence="1"/>
<dbReference type="EMBL" id="CP000437">
    <property type="protein sequence ID" value="ABI83383.1"/>
    <property type="molecule type" value="Genomic_DNA"/>
</dbReference>
<dbReference type="RefSeq" id="WP_011648768.1">
    <property type="nucleotide sequence ID" value="NC_017463.1"/>
</dbReference>
<dbReference type="SMR" id="Q0BKK1"/>
<dbReference type="KEGG" id="fth:FTH_1601"/>
<dbReference type="GO" id="GO:0005829">
    <property type="term" value="C:cytosol"/>
    <property type="evidence" value="ECO:0007669"/>
    <property type="project" value="TreeGrafter"/>
</dbReference>
<dbReference type="GO" id="GO:0005524">
    <property type="term" value="F:ATP binding"/>
    <property type="evidence" value="ECO:0007669"/>
    <property type="project" value="UniProtKB-UniRule"/>
</dbReference>
<dbReference type="GO" id="GO:0004798">
    <property type="term" value="F:dTMP kinase activity"/>
    <property type="evidence" value="ECO:0007669"/>
    <property type="project" value="UniProtKB-UniRule"/>
</dbReference>
<dbReference type="GO" id="GO:0006233">
    <property type="term" value="P:dTDP biosynthetic process"/>
    <property type="evidence" value="ECO:0007669"/>
    <property type="project" value="InterPro"/>
</dbReference>
<dbReference type="GO" id="GO:0006235">
    <property type="term" value="P:dTTP biosynthetic process"/>
    <property type="evidence" value="ECO:0007669"/>
    <property type="project" value="UniProtKB-UniRule"/>
</dbReference>
<dbReference type="GO" id="GO:0006227">
    <property type="term" value="P:dUDP biosynthetic process"/>
    <property type="evidence" value="ECO:0007669"/>
    <property type="project" value="TreeGrafter"/>
</dbReference>
<dbReference type="CDD" id="cd01672">
    <property type="entry name" value="TMPK"/>
    <property type="match status" value="1"/>
</dbReference>
<dbReference type="FunFam" id="3.40.50.300:FF:000225">
    <property type="entry name" value="Thymidylate kinase"/>
    <property type="match status" value="1"/>
</dbReference>
<dbReference type="Gene3D" id="3.40.50.300">
    <property type="entry name" value="P-loop containing nucleotide triphosphate hydrolases"/>
    <property type="match status" value="1"/>
</dbReference>
<dbReference type="HAMAP" id="MF_00165">
    <property type="entry name" value="Thymidylate_kinase"/>
    <property type="match status" value="1"/>
</dbReference>
<dbReference type="InterPro" id="IPR027417">
    <property type="entry name" value="P-loop_NTPase"/>
</dbReference>
<dbReference type="InterPro" id="IPR039430">
    <property type="entry name" value="Thymidylate_kin-like_dom"/>
</dbReference>
<dbReference type="InterPro" id="IPR018095">
    <property type="entry name" value="Thymidylate_kin_CS"/>
</dbReference>
<dbReference type="InterPro" id="IPR018094">
    <property type="entry name" value="Thymidylate_kinase"/>
</dbReference>
<dbReference type="NCBIfam" id="TIGR00041">
    <property type="entry name" value="DTMP_kinase"/>
    <property type="match status" value="1"/>
</dbReference>
<dbReference type="PANTHER" id="PTHR10344">
    <property type="entry name" value="THYMIDYLATE KINASE"/>
    <property type="match status" value="1"/>
</dbReference>
<dbReference type="PANTHER" id="PTHR10344:SF4">
    <property type="entry name" value="UMP-CMP KINASE 2, MITOCHONDRIAL"/>
    <property type="match status" value="1"/>
</dbReference>
<dbReference type="Pfam" id="PF02223">
    <property type="entry name" value="Thymidylate_kin"/>
    <property type="match status" value="1"/>
</dbReference>
<dbReference type="SUPFAM" id="SSF52540">
    <property type="entry name" value="P-loop containing nucleoside triphosphate hydrolases"/>
    <property type="match status" value="1"/>
</dbReference>
<dbReference type="PROSITE" id="PS01331">
    <property type="entry name" value="THYMIDYLATE_KINASE"/>
    <property type="match status" value="1"/>
</dbReference>
<gene>
    <name evidence="1" type="primary">tmk</name>
    <name type="ordered locus">FTH_1601</name>
</gene>
<evidence type="ECO:0000255" key="1">
    <source>
        <dbReference type="HAMAP-Rule" id="MF_00165"/>
    </source>
</evidence>
<feature type="chain" id="PRO_1000023196" description="Thymidylate kinase">
    <location>
        <begin position="1"/>
        <end position="209"/>
    </location>
</feature>
<feature type="binding site" evidence="1">
    <location>
        <begin position="10"/>
        <end position="17"/>
    </location>
    <ligand>
        <name>ATP</name>
        <dbReference type="ChEBI" id="CHEBI:30616"/>
    </ligand>
</feature>
<protein>
    <recommendedName>
        <fullName evidence="1">Thymidylate kinase</fullName>
        <ecNumber evidence="1">2.7.4.9</ecNumber>
    </recommendedName>
    <alternativeName>
        <fullName evidence="1">dTMP kinase</fullName>
    </alternativeName>
</protein>